<evidence type="ECO:0000255" key="1">
    <source>
        <dbReference type="HAMAP-Rule" id="MF_00604"/>
    </source>
</evidence>
<name>SUI1_METMJ</name>
<reference key="1">
    <citation type="journal article" date="2009" name="Stand. Genomic Sci.">
        <title>Complete genome sequence of Methanoculleus marisnigri Romesser et al. 1981 type strain JR1.</title>
        <authorList>
            <person name="Anderson I.J."/>
            <person name="Sieprawska-Lupa M."/>
            <person name="Lapidus A."/>
            <person name="Nolan M."/>
            <person name="Copeland A."/>
            <person name="Glavina Del Rio T."/>
            <person name="Tice H."/>
            <person name="Dalin E."/>
            <person name="Barry K."/>
            <person name="Saunders E."/>
            <person name="Han C."/>
            <person name="Brettin T."/>
            <person name="Detter J.C."/>
            <person name="Bruce D."/>
            <person name="Mikhailova N."/>
            <person name="Pitluck S."/>
            <person name="Hauser L."/>
            <person name="Land M."/>
            <person name="Lucas S."/>
            <person name="Richardson P."/>
            <person name="Whitman W.B."/>
            <person name="Kyrpides N.C."/>
        </authorList>
    </citation>
    <scope>NUCLEOTIDE SEQUENCE [LARGE SCALE GENOMIC DNA]</scope>
    <source>
        <strain>ATCC 35101 / DSM 1498 / JR1</strain>
    </source>
</reference>
<gene>
    <name type="ordered locus">Memar_1997</name>
</gene>
<dbReference type="EMBL" id="CP000562">
    <property type="protein sequence ID" value="ABN57923.1"/>
    <property type="molecule type" value="Genomic_DNA"/>
</dbReference>
<dbReference type="SMR" id="A3CX23"/>
<dbReference type="STRING" id="368407.Memar_1997"/>
<dbReference type="KEGG" id="mem:Memar_1997"/>
<dbReference type="eggNOG" id="arCOG04223">
    <property type="taxonomic scope" value="Archaea"/>
</dbReference>
<dbReference type="HOGENOM" id="CLU_082805_6_1_2"/>
<dbReference type="OrthoDB" id="11182at2157"/>
<dbReference type="Proteomes" id="UP000002146">
    <property type="component" value="Chromosome"/>
</dbReference>
<dbReference type="GO" id="GO:0003729">
    <property type="term" value="F:mRNA binding"/>
    <property type="evidence" value="ECO:0007669"/>
    <property type="project" value="TreeGrafter"/>
</dbReference>
<dbReference type="GO" id="GO:0003743">
    <property type="term" value="F:translation initiation factor activity"/>
    <property type="evidence" value="ECO:0007669"/>
    <property type="project" value="InterPro"/>
</dbReference>
<dbReference type="GO" id="GO:0001731">
    <property type="term" value="P:formation of translation preinitiation complex"/>
    <property type="evidence" value="ECO:0007669"/>
    <property type="project" value="TreeGrafter"/>
</dbReference>
<dbReference type="GO" id="GO:0006417">
    <property type="term" value="P:regulation of translation"/>
    <property type="evidence" value="ECO:0007669"/>
    <property type="project" value="UniProtKB-UniRule"/>
</dbReference>
<dbReference type="GO" id="GO:0002188">
    <property type="term" value="P:translation reinitiation"/>
    <property type="evidence" value="ECO:0007669"/>
    <property type="project" value="TreeGrafter"/>
</dbReference>
<dbReference type="CDD" id="cd11567">
    <property type="entry name" value="YciH_like"/>
    <property type="match status" value="1"/>
</dbReference>
<dbReference type="FunFam" id="3.30.780.10:FF:000006">
    <property type="entry name" value="Protein translation factor SUI1 homolog"/>
    <property type="match status" value="1"/>
</dbReference>
<dbReference type="Gene3D" id="3.30.780.10">
    <property type="entry name" value="SUI1-like domain"/>
    <property type="match status" value="1"/>
</dbReference>
<dbReference type="HAMAP" id="MF_00604">
    <property type="entry name" value="SUI1"/>
    <property type="match status" value="1"/>
</dbReference>
<dbReference type="InterPro" id="IPR050318">
    <property type="entry name" value="DENR/SUI1_TIF"/>
</dbReference>
<dbReference type="InterPro" id="IPR001950">
    <property type="entry name" value="SUI1"/>
</dbReference>
<dbReference type="InterPro" id="IPR022851">
    <property type="entry name" value="SUI1_arc"/>
</dbReference>
<dbReference type="InterPro" id="IPR005872">
    <property type="entry name" value="SUI1_arc_bac"/>
</dbReference>
<dbReference type="InterPro" id="IPR036877">
    <property type="entry name" value="SUI1_dom_sf"/>
</dbReference>
<dbReference type="NCBIfam" id="NF002096">
    <property type="entry name" value="PRK00939.1"/>
    <property type="match status" value="1"/>
</dbReference>
<dbReference type="NCBIfam" id="TIGR01158">
    <property type="entry name" value="SUI1_rel"/>
    <property type="match status" value="1"/>
</dbReference>
<dbReference type="PANTHER" id="PTHR12789:SF0">
    <property type="entry name" value="DENSITY-REGULATED PROTEIN"/>
    <property type="match status" value="1"/>
</dbReference>
<dbReference type="PANTHER" id="PTHR12789">
    <property type="entry name" value="DENSITY-REGULATED PROTEIN HOMOLOG"/>
    <property type="match status" value="1"/>
</dbReference>
<dbReference type="Pfam" id="PF01253">
    <property type="entry name" value="SUI1"/>
    <property type="match status" value="1"/>
</dbReference>
<dbReference type="PIRSF" id="PIRSF037511">
    <property type="entry name" value="Transl_init_SUI1_pro"/>
    <property type="match status" value="1"/>
</dbReference>
<dbReference type="SUPFAM" id="SSF55159">
    <property type="entry name" value="eIF1-like"/>
    <property type="match status" value="1"/>
</dbReference>
<dbReference type="PROSITE" id="PS50296">
    <property type="entry name" value="SUI1"/>
    <property type="match status" value="1"/>
</dbReference>
<feature type="chain" id="PRO_1000006437" description="Protein translation factor SUI1 homolog">
    <location>
        <begin position="1"/>
        <end position="101"/>
    </location>
</feature>
<protein>
    <recommendedName>
        <fullName evidence="1">Protein translation factor SUI1 homolog</fullName>
    </recommendedName>
</protein>
<sequence length="101" mass="11313">MNGGICPTCGLPKELCICEEVAKEQQRISVKINRRRYGKEVTVIEGLDPYDIDLEDLSKFLKAKLACGGTVKDSSIELQGNHRERVKDLLAQKGYNMENIS</sequence>
<organism>
    <name type="scientific">Methanoculleus marisnigri (strain ATCC 35101 / DSM 1498 / JR1)</name>
    <dbReference type="NCBI Taxonomy" id="368407"/>
    <lineage>
        <taxon>Archaea</taxon>
        <taxon>Methanobacteriati</taxon>
        <taxon>Methanobacteriota</taxon>
        <taxon>Stenosarchaea group</taxon>
        <taxon>Methanomicrobia</taxon>
        <taxon>Methanomicrobiales</taxon>
        <taxon>Methanomicrobiaceae</taxon>
        <taxon>Methanoculleus</taxon>
    </lineage>
</organism>
<keyword id="KW-0648">Protein biosynthesis</keyword>
<keyword id="KW-0810">Translation regulation</keyword>
<comment type="similarity">
    <text evidence="1">Belongs to the SUI1 family.</text>
</comment>
<proteinExistence type="inferred from homology"/>
<accession>A3CX23</accession>